<reference key="1">
    <citation type="journal article" date="2007" name="J. Bacteriol.">
        <title>Genome of the opportunistic pathogen Streptococcus sanguinis.</title>
        <authorList>
            <person name="Xu P."/>
            <person name="Alves J.M."/>
            <person name="Kitten T."/>
            <person name="Brown A."/>
            <person name="Chen Z."/>
            <person name="Ozaki L.S."/>
            <person name="Manque P."/>
            <person name="Ge X."/>
            <person name="Serrano M.G."/>
            <person name="Puiu D."/>
            <person name="Hendricks S."/>
            <person name="Wang Y."/>
            <person name="Chaplin M.D."/>
            <person name="Akan D."/>
            <person name="Paik S."/>
            <person name="Peterson D.L."/>
            <person name="Macrina F.L."/>
            <person name="Buck G.A."/>
        </authorList>
    </citation>
    <scope>NUCLEOTIDE SEQUENCE [LARGE SCALE GENOMIC DNA]</scope>
    <source>
        <strain>SK36</strain>
    </source>
</reference>
<name>LUXS_STRSV</name>
<evidence type="ECO:0000255" key="1">
    <source>
        <dbReference type="HAMAP-Rule" id="MF_00091"/>
    </source>
</evidence>
<evidence type="ECO:0000305" key="2"/>
<keyword id="KW-0071">Autoinducer synthesis</keyword>
<keyword id="KW-0408">Iron</keyword>
<keyword id="KW-0456">Lyase</keyword>
<keyword id="KW-0479">Metal-binding</keyword>
<keyword id="KW-0673">Quorum sensing</keyword>
<keyword id="KW-1185">Reference proteome</keyword>
<feature type="chain" id="PRO_0000298048" description="S-ribosylhomocysteine lyase">
    <location>
        <begin position="1"/>
        <end position="160"/>
    </location>
</feature>
<feature type="binding site" evidence="1">
    <location>
        <position position="57"/>
    </location>
    <ligand>
        <name>Fe cation</name>
        <dbReference type="ChEBI" id="CHEBI:24875"/>
    </ligand>
</feature>
<feature type="binding site" evidence="1">
    <location>
        <position position="61"/>
    </location>
    <ligand>
        <name>Fe cation</name>
        <dbReference type="ChEBI" id="CHEBI:24875"/>
    </ligand>
</feature>
<feature type="binding site" evidence="1">
    <location>
        <position position="127"/>
    </location>
    <ligand>
        <name>Fe cation</name>
        <dbReference type="ChEBI" id="CHEBI:24875"/>
    </ligand>
</feature>
<accession>A3CPX9</accession>
<protein>
    <recommendedName>
        <fullName evidence="1">S-ribosylhomocysteine lyase</fullName>
        <ecNumber evidence="1">4.4.1.21</ecNumber>
    </recommendedName>
    <alternativeName>
        <fullName evidence="1">AI-2 synthesis protein</fullName>
    </alternativeName>
    <alternativeName>
        <fullName evidence="1">Autoinducer-2 production protein LuxS</fullName>
    </alternativeName>
</protein>
<gene>
    <name evidence="1" type="primary">luxS</name>
    <name type="ordered locus">SSA_1853</name>
</gene>
<comment type="function">
    <text evidence="1">Involved in the synthesis of autoinducer 2 (AI-2) which is secreted by bacteria and is used to communicate both the cell density and the metabolic potential of the environment. The regulation of gene expression in response to changes in cell density is called quorum sensing. Catalyzes the transformation of S-ribosylhomocysteine (RHC) to homocysteine (HC) and 4,5-dihydroxy-2,3-pentadione (DPD).</text>
</comment>
<comment type="catalytic activity">
    <reaction evidence="1">
        <text>S-(5-deoxy-D-ribos-5-yl)-L-homocysteine = (S)-4,5-dihydroxypentane-2,3-dione + L-homocysteine</text>
        <dbReference type="Rhea" id="RHEA:17753"/>
        <dbReference type="ChEBI" id="CHEBI:29484"/>
        <dbReference type="ChEBI" id="CHEBI:58195"/>
        <dbReference type="ChEBI" id="CHEBI:58199"/>
        <dbReference type="EC" id="4.4.1.21"/>
    </reaction>
</comment>
<comment type="cofactor">
    <cofactor evidence="1">
        <name>Fe cation</name>
        <dbReference type="ChEBI" id="CHEBI:24875"/>
    </cofactor>
    <text evidence="1">Binds 1 Fe cation per subunit.</text>
</comment>
<comment type="subunit">
    <text evidence="1">Homodimer.</text>
</comment>
<comment type="similarity">
    <text evidence="1">Belongs to the LuxS family.</text>
</comment>
<comment type="sequence caution" evidence="2">
    <conflict type="erroneous initiation">
        <sequence resource="EMBL-CDS" id="ABN45234"/>
    </conflict>
</comment>
<proteinExistence type="inferred from homology"/>
<organism>
    <name type="scientific">Streptococcus sanguinis (strain SK36)</name>
    <dbReference type="NCBI Taxonomy" id="388919"/>
    <lineage>
        <taxon>Bacteria</taxon>
        <taxon>Bacillati</taxon>
        <taxon>Bacillota</taxon>
        <taxon>Bacilli</taxon>
        <taxon>Lactobacillales</taxon>
        <taxon>Streptococcaceae</taxon>
        <taxon>Streptococcus</taxon>
    </lineage>
</organism>
<sequence>MSKEVVVESFELDHTIVKAPYVRLIGEETGPKGDIISNFDIRLVQPNEDSIPTAGLHTIEHLLAMLIRKRIDGMIDCSPFGCRTGFHMIMWGQHSSSQIAQVIKSCLEEIAESTSWEDVPGTTIESCGNYKDHSLFSAKEWAKLILSQGISDDAFERHVI</sequence>
<dbReference type="EC" id="4.4.1.21" evidence="1"/>
<dbReference type="EMBL" id="CP000387">
    <property type="protein sequence ID" value="ABN45234.1"/>
    <property type="status" value="ALT_INIT"/>
    <property type="molecule type" value="Genomic_DNA"/>
</dbReference>
<dbReference type="RefSeq" id="WP_002905191.1">
    <property type="nucleotide sequence ID" value="NC_009009.1"/>
</dbReference>
<dbReference type="RefSeq" id="YP_001035784.1">
    <property type="nucleotide sequence ID" value="NC_009009.1"/>
</dbReference>
<dbReference type="SMR" id="A3CPX9"/>
<dbReference type="STRING" id="388919.SSA_1853"/>
<dbReference type="KEGG" id="ssa:SSA_1853"/>
<dbReference type="PATRIC" id="fig|388919.9.peg.1758"/>
<dbReference type="eggNOG" id="COG1854">
    <property type="taxonomic scope" value="Bacteria"/>
</dbReference>
<dbReference type="HOGENOM" id="CLU_107531_2_1_9"/>
<dbReference type="OrthoDB" id="9788129at2"/>
<dbReference type="Proteomes" id="UP000002148">
    <property type="component" value="Chromosome"/>
</dbReference>
<dbReference type="GO" id="GO:0005506">
    <property type="term" value="F:iron ion binding"/>
    <property type="evidence" value="ECO:0007669"/>
    <property type="project" value="InterPro"/>
</dbReference>
<dbReference type="GO" id="GO:0043768">
    <property type="term" value="F:S-ribosylhomocysteine lyase activity"/>
    <property type="evidence" value="ECO:0007669"/>
    <property type="project" value="UniProtKB-UniRule"/>
</dbReference>
<dbReference type="GO" id="GO:0009372">
    <property type="term" value="P:quorum sensing"/>
    <property type="evidence" value="ECO:0007669"/>
    <property type="project" value="UniProtKB-UniRule"/>
</dbReference>
<dbReference type="Gene3D" id="3.30.1360.80">
    <property type="entry name" value="S-ribosylhomocysteinase (LuxS)"/>
    <property type="match status" value="1"/>
</dbReference>
<dbReference type="HAMAP" id="MF_00091">
    <property type="entry name" value="LuxS"/>
    <property type="match status" value="1"/>
</dbReference>
<dbReference type="InterPro" id="IPR037005">
    <property type="entry name" value="LuxS_sf"/>
</dbReference>
<dbReference type="InterPro" id="IPR011249">
    <property type="entry name" value="Metalloenz_LuxS/M16"/>
</dbReference>
<dbReference type="InterPro" id="IPR003815">
    <property type="entry name" value="S-ribosylhomocysteinase"/>
</dbReference>
<dbReference type="NCBIfam" id="NF002607">
    <property type="entry name" value="PRK02260.2-5"/>
    <property type="match status" value="1"/>
</dbReference>
<dbReference type="NCBIfam" id="NF002608">
    <property type="entry name" value="PRK02260.3-1"/>
    <property type="match status" value="1"/>
</dbReference>
<dbReference type="PANTHER" id="PTHR35799">
    <property type="entry name" value="S-RIBOSYLHOMOCYSTEINE LYASE"/>
    <property type="match status" value="1"/>
</dbReference>
<dbReference type="PANTHER" id="PTHR35799:SF1">
    <property type="entry name" value="S-RIBOSYLHOMOCYSTEINE LYASE"/>
    <property type="match status" value="1"/>
</dbReference>
<dbReference type="Pfam" id="PF02664">
    <property type="entry name" value="LuxS"/>
    <property type="match status" value="1"/>
</dbReference>
<dbReference type="PIRSF" id="PIRSF006160">
    <property type="entry name" value="AI2"/>
    <property type="match status" value="1"/>
</dbReference>
<dbReference type="PRINTS" id="PR01487">
    <property type="entry name" value="LUXSPROTEIN"/>
</dbReference>
<dbReference type="SUPFAM" id="SSF63411">
    <property type="entry name" value="LuxS/MPP-like metallohydrolase"/>
    <property type="match status" value="1"/>
</dbReference>